<protein>
    <recommendedName>
        <fullName evidence="1">tRNA pseudouridine synthase B</fullName>
        <ecNumber evidence="1">5.4.99.25</ecNumber>
    </recommendedName>
    <alternativeName>
        <fullName evidence="1">tRNA pseudouridine(55) synthase</fullName>
        <shortName evidence="1">Psi55 synthase</shortName>
    </alternativeName>
    <alternativeName>
        <fullName evidence="1">tRNA pseudouridylate synthase</fullName>
    </alternativeName>
    <alternativeName>
        <fullName evidence="1">tRNA-uridine isomerase</fullName>
    </alternativeName>
</protein>
<reference key="1">
    <citation type="journal article" date="2007" name="PLoS Biol.">
        <title>Evolution of symbiotic bacteria in the distal human intestine.</title>
        <authorList>
            <person name="Xu J."/>
            <person name="Mahowald M.A."/>
            <person name="Ley R.E."/>
            <person name="Lozupone C.A."/>
            <person name="Hamady M."/>
            <person name="Martens E.C."/>
            <person name="Henrissat B."/>
            <person name="Coutinho P.M."/>
            <person name="Minx P."/>
            <person name="Latreille P."/>
            <person name="Cordum H."/>
            <person name="Van Brunt A."/>
            <person name="Kim K."/>
            <person name="Fulton R.S."/>
            <person name="Fulton L.A."/>
            <person name="Clifton S.W."/>
            <person name="Wilson R.K."/>
            <person name="Knight R.D."/>
            <person name="Gordon J.I."/>
        </authorList>
    </citation>
    <scope>NUCLEOTIDE SEQUENCE [LARGE SCALE GENOMIC DNA]</scope>
    <source>
        <strain>ATCC 8503 / DSM 20701 / CIP 104284 / JCM 5825 / NCTC 11152</strain>
    </source>
</reference>
<comment type="function">
    <text evidence="1">Responsible for synthesis of pseudouridine from uracil-55 in the psi GC loop of transfer RNAs.</text>
</comment>
<comment type="catalytic activity">
    <reaction evidence="1">
        <text>uridine(55) in tRNA = pseudouridine(55) in tRNA</text>
        <dbReference type="Rhea" id="RHEA:42532"/>
        <dbReference type="Rhea" id="RHEA-COMP:10101"/>
        <dbReference type="Rhea" id="RHEA-COMP:10102"/>
        <dbReference type="ChEBI" id="CHEBI:65314"/>
        <dbReference type="ChEBI" id="CHEBI:65315"/>
        <dbReference type="EC" id="5.4.99.25"/>
    </reaction>
</comment>
<comment type="similarity">
    <text evidence="1">Belongs to the pseudouridine synthase TruB family. Type 1 subfamily.</text>
</comment>
<gene>
    <name evidence="1" type="primary">truB</name>
    <name type="ordered locus">BDI_2406</name>
</gene>
<keyword id="KW-0413">Isomerase</keyword>
<keyword id="KW-1185">Reference proteome</keyword>
<keyword id="KW-0819">tRNA processing</keyword>
<organism>
    <name type="scientific">Parabacteroides distasonis (strain ATCC 8503 / DSM 20701 / CIP 104284 / JCM 5825 / NCTC 11152)</name>
    <dbReference type="NCBI Taxonomy" id="435591"/>
    <lineage>
        <taxon>Bacteria</taxon>
        <taxon>Pseudomonadati</taxon>
        <taxon>Bacteroidota</taxon>
        <taxon>Bacteroidia</taxon>
        <taxon>Bacteroidales</taxon>
        <taxon>Tannerellaceae</taxon>
        <taxon>Parabacteroides</taxon>
    </lineage>
</organism>
<sequence>MDFIAGEILYFNKPLTWTSFDLVNKFRYKLSRKLKVKKIKVGHAGTLDPLATGVMIVCTGRATKRIDEFQYQTKEYIATLKLGETTPSFDLEKEIDAVYPTEHITRELVEEVLKTFVGTIQQIPPVFSACKVEGKRAYELARKGEEVELKSKTLVIDELELLECDLPVIKIRVVCSKGTYIRALARDIGKALGSGAHLIGLERTRIGEVTLDMCMSPEEIDDFLEQNVVKIEEEK</sequence>
<feature type="chain" id="PRO_1000084633" description="tRNA pseudouridine synthase B">
    <location>
        <begin position="1"/>
        <end position="235"/>
    </location>
</feature>
<feature type="active site" description="Nucleophile" evidence="1">
    <location>
        <position position="48"/>
    </location>
</feature>
<proteinExistence type="inferred from homology"/>
<evidence type="ECO:0000255" key="1">
    <source>
        <dbReference type="HAMAP-Rule" id="MF_01080"/>
    </source>
</evidence>
<name>TRUB_PARD8</name>
<dbReference type="EC" id="5.4.99.25" evidence="1"/>
<dbReference type="EMBL" id="CP000140">
    <property type="protein sequence ID" value="ABR44131.1"/>
    <property type="molecule type" value="Genomic_DNA"/>
</dbReference>
<dbReference type="RefSeq" id="WP_011966838.1">
    <property type="nucleotide sequence ID" value="NC_009615.1"/>
</dbReference>
<dbReference type="SMR" id="A6LEL7"/>
<dbReference type="STRING" id="435591.BDI_2406"/>
<dbReference type="PaxDb" id="435591-BDI_2406"/>
<dbReference type="KEGG" id="pdi:BDI_2406"/>
<dbReference type="PATRIC" id="fig|435591.13.peg.2393"/>
<dbReference type="eggNOG" id="COG0130">
    <property type="taxonomic scope" value="Bacteria"/>
</dbReference>
<dbReference type="HOGENOM" id="CLU_032087_2_0_10"/>
<dbReference type="BioCyc" id="PDIS435591:G1G5A-2473-MONOMER"/>
<dbReference type="Proteomes" id="UP000000566">
    <property type="component" value="Chromosome"/>
</dbReference>
<dbReference type="GO" id="GO:0003723">
    <property type="term" value="F:RNA binding"/>
    <property type="evidence" value="ECO:0007669"/>
    <property type="project" value="InterPro"/>
</dbReference>
<dbReference type="GO" id="GO:0160148">
    <property type="term" value="F:tRNA pseudouridine(55) synthase activity"/>
    <property type="evidence" value="ECO:0007669"/>
    <property type="project" value="UniProtKB-EC"/>
</dbReference>
<dbReference type="GO" id="GO:1990481">
    <property type="term" value="P:mRNA pseudouridine synthesis"/>
    <property type="evidence" value="ECO:0007669"/>
    <property type="project" value="TreeGrafter"/>
</dbReference>
<dbReference type="GO" id="GO:0031119">
    <property type="term" value="P:tRNA pseudouridine synthesis"/>
    <property type="evidence" value="ECO:0007669"/>
    <property type="project" value="UniProtKB-UniRule"/>
</dbReference>
<dbReference type="CDD" id="cd02573">
    <property type="entry name" value="PseudoU_synth_EcTruB"/>
    <property type="match status" value="1"/>
</dbReference>
<dbReference type="Gene3D" id="3.30.2350.10">
    <property type="entry name" value="Pseudouridine synthase"/>
    <property type="match status" value="1"/>
</dbReference>
<dbReference type="HAMAP" id="MF_01080">
    <property type="entry name" value="TruB_bact"/>
    <property type="match status" value="1"/>
</dbReference>
<dbReference type="InterPro" id="IPR020103">
    <property type="entry name" value="PsdUridine_synth_cat_dom_sf"/>
</dbReference>
<dbReference type="InterPro" id="IPR002501">
    <property type="entry name" value="PsdUridine_synth_N"/>
</dbReference>
<dbReference type="InterPro" id="IPR014780">
    <property type="entry name" value="tRNA_psdUridine_synth_TruB"/>
</dbReference>
<dbReference type="InterPro" id="IPR032819">
    <property type="entry name" value="TruB_C"/>
</dbReference>
<dbReference type="NCBIfam" id="TIGR00431">
    <property type="entry name" value="TruB"/>
    <property type="match status" value="1"/>
</dbReference>
<dbReference type="PANTHER" id="PTHR13767:SF2">
    <property type="entry name" value="PSEUDOURIDYLATE SYNTHASE TRUB1"/>
    <property type="match status" value="1"/>
</dbReference>
<dbReference type="PANTHER" id="PTHR13767">
    <property type="entry name" value="TRNA-PSEUDOURIDINE SYNTHASE"/>
    <property type="match status" value="1"/>
</dbReference>
<dbReference type="Pfam" id="PF16198">
    <property type="entry name" value="TruB_C_2"/>
    <property type="match status" value="1"/>
</dbReference>
<dbReference type="Pfam" id="PF01509">
    <property type="entry name" value="TruB_N"/>
    <property type="match status" value="1"/>
</dbReference>
<dbReference type="SUPFAM" id="SSF55120">
    <property type="entry name" value="Pseudouridine synthase"/>
    <property type="match status" value="1"/>
</dbReference>
<accession>A6LEL7</accession>